<organismHost>
    <name type="scientific">Ornithodoros</name>
    <name type="common">relapsing fever ticks</name>
    <dbReference type="NCBI Taxonomy" id="6937"/>
</organismHost>
<organismHost>
    <name type="scientific">Phacochoerus aethiopicus</name>
    <name type="common">Warthog</name>
    <dbReference type="NCBI Taxonomy" id="85517"/>
</organismHost>
<organismHost>
    <name type="scientific">Phacochoerus africanus</name>
    <name type="common">Warthog</name>
    <dbReference type="NCBI Taxonomy" id="41426"/>
</organismHost>
<organismHost>
    <name type="scientific">Potamochoerus larvatus</name>
    <name type="common">Bushpig</name>
    <dbReference type="NCBI Taxonomy" id="273792"/>
</organismHost>
<organismHost>
    <name type="scientific">Sus scrofa</name>
    <name type="common">Pig</name>
    <dbReference type="NCBI Taxonomy" id="9823"/>
</organismHost>
<gene>
    <name type="ordered locus">War-107</name>
</gene>
<organism>
    <name type="scientific">African swine fever virus (isolate Warthog/Namibia/Wart80/1980)</name>
    <name type="common">ASFV</name>
    <dbReference type="NCBI Taxonomy" id="561444"/>
    <lineage>
        <taxon>Viruses</taxon>
        <taxon>Varidnaviria</taxon>
        <taxon>Bamfordvirae</taxon>
        <taxon>Nucleocytoviricota</taxon>
        <taxon>Pokkesviricetes</taxon>
        <taxon>Asfuvirales</taxon>
        <taxon>Asfarviridae</taxon>
        <taxon>Asfivirus</taxon>
        <taxon>African swine fever virus</taxon>
    </lineage>
</organism>
<reference key="1">
    <citation type="submission" date="2003-03" db="EMBL/GenBank/DDBJ databases">
        <title>African swine fever virus genomes.</title>
        <authorList>
            <person name="Kutish G.F."/>
            <person name="Rock D.L."/>
        </authorList>
    </citation>
    <scope>NUCLEOTIDE SEQUENCE [LARGE SCALE GENOMIC DNA]</scope>
</reference>
<dbReference type="EC" id="2.7.7.7" evidence="2"/>
<dbReference type="EMBL" id="AY261366">
    <property type="status" value="NOT_ANNOTATED_CDS"/>
    <property type="molecule type" value="Genomic_DNA"/>
</dbReference>
<dbReference type="SMR" id="P0C985"/>
<dbReference type="Proteomes" id="UP000000858">
    <property type="component" value="Segment"/>
</dbReference>
<dbReference type="GO" id="GO:0044423">
    <property type="term" value="C:virion component"/>
    <property type="evidence" value="ECO:0007669"/>
    <property type="project" value="UniProtKB-KW"/>
</dbReference>
<dbReference type="GO" id="GO:0003677">
    <property type="term" value="F:DNA binding"/>
    <property type="evidence" value="ECO:0007669"/>
    <property type="project" value="UniProtKB-KW"/>
</dbReference>
<dbReference type="GO" id="GO:0003887">
    <property type="term" value="F:DNA-directed DNA polymerase activity"/>
    <property type="evidence" value="ECO:0007669"/>
    <property type="project" value="UniProtKB-KW"/>
</dbReference>
<dbReference type="GO" id="GO:0046872">
    <property type="term" value="F:metal ion binding"/>
    <property type="evidence" value="ECO:0007669"/>
    <property type="project" value="UniProtKB-KW"/>
</dbReference>
<dbReference type="GO" id="GO:0006303">
    <property type="term" value="P:double-strand break repair via nonhomologous end joining"/>
    <property type="evidence" value="ECO:0007669"/>
    <property type="project" value="TreeGrafter"/>
</dbReference>
<dbReference type="Gene3D" id="3.30.460.10">
    <property type="entry name" value="Beta Polymerase, domain 2"/>
    <property type="match status" value="1"/>
</dbReference>
<dbReference type="Gene3D" id="3.30.210.10">
    <property type="entry name" value="DNA polymerase, thumb domain"/>
    <property type="match status" value="1"/>
</dbReference>
<dbReference type="InterPro" id="IPR019843">
    <property type="entry name" value="DNA_pol-X_BS"/>
</dbReference>
<dbReference type="InterPro" id="IPR037160">
    <property type="entry name" value="DNA_Pol_thumb_sf"/>
</dbReference>
<dbReference type="InterPro" id="IPR022312">
    <property type="entry name" value="DNA_pol_X"/>
</dbReference>
<dbReference type="InterPro" id="IPR043519">
    <property type="entry name" value="NT_sf"/>
</dbReference>
<dbReference type="InterPro" id="IPR029398">
    <property type="entry name" value="PolB_thumb"/>
</dbReference>
<dbReference type="PANTHER" id="PTHR11276:SF28">
    <property type="entry name" value="DNA POLYMERASE LAMBDA"/>
    <property type="match status" value="1"/>
</dbReference>
<dbReference type="PANTHER" id="PTHR11276">
    <property type="entry name" value="DNA POLYMERASE TYPE-X FAMILY MEMBER"/>
    <property type="match status" value="1"/>
</dbReference>
<dbReference type="Pfam" id="PF14791">
    <property type="entry name" value="DNA_pol_B_thumb"/>
    <property type="match status" value="1"/>
</dbReference>
<dbReference type="SUPFAM" id="SSF81301">
    <property type="entry name" value="Nucleotidyltransferase"/>
    <property type="match status" value="1"/>
</dbReference>
<dbReference type="PROSITE" id="PS00522">
    <property type="entry name" value="DNA_POLYMERASE_X"/>
    <property type="match status" value="1"/>
</dbReference>
<proteinExistence type="inferred from homology"/>
<feature type="chain" id="PRO_0000373084" description="Repair DNA polymerase X">
    <location>
        <begin position="1"/>
        <end position="174"/>
    </location>
</feature>
<feature type="region of interest" description="Involved in ssDNA binding" evidence="1">
    <location>
        <begin position="42"/>
        <end position="51"/>
    </location>
</feature>
<feature type="binding site" evidence="2">
    <location>
        <position position="49"/>
    </location>
    <ligand>
        <name>Mg(2+)</name>
        <dbReference type="ChEBI" id="CHEBI:18420"/>
    </ligand>
</feature>
<feature type="binding site" evidence="2">
    <location>
        <position position="51"/>
    </location>
    <ligand>
        <name>Mg(2+)</name>
        <dbReference type="ChEBI" id="CHEBI:18420"/>
    </ligand>
</feature>
<feature type="binding site" evidence="2">
    <location>
        <position position="100"/>
    </location>
    <ligand>
        <name>Mg(2+)</name>
        <dbReference type="ChEBI" id="CHEBI:18420"/>
    </ligand>
</feature>
<feature type="site" description="Stabilizes dGTP in a syn conformation to overcome the Watson-Crick base pairing constraint" evidence="2">
    <location>
        <position position="115"/>
    </location>
</feature>
<feature type="disulfide bond" evidence="2">
    <location>
        <begin position="81"/>
        <end position="86"/>
    </location>
</feature>
<evidence type="ECO:0000250" key="1"/>
<evidence type="ECO:0000250" key="2">
    <source>
        <dbReference type="UniProtKB" id="P42494"/>
    </source>
</evidence>
<evidence type="ECO:0000305" key="3"/>
<keyword id="KW-1015">Disulfide bond</keyword>
<keyword id="KW-0227">DNA damage</keyword>
<keyword id="KW-0234">DNA repair</keyword>
<keyword id="KW-0238">DNA-binding</keyword>
<keyword id="KW-0239">DNA-directed DNA polymerase</keyword>
<keyword id="KW-0460">Magnesium</keyword>
<keyword id="KW-0479">Metal-binding</keyword>
<keyword id="KW-0548">Nucleotidyltransferase</keyword>
<keyword id="KW-0808">Transferase</keyword>
<keyword id="KW-0946">Virion</keyword>
<comment type="function">
    <text evidence="2 3">Error-prone polymerase lacking a proofreading 3'-5' exonuclease which catalyzes the gap-filling reaction during the DNA repair process (By similarity). Specifically binds intermediates in the single-nucleotide base-excision repair process (By similarity). Also catalyzes DNA polymerization with low nucleotide-insertion fidelity (By similarity). Probably acts as a strategic DNA mutase, which gives rise to a rapid emergence of variants (By similarity). Generates mismatched G-G pairs, in that case, the polymerase first binds the deoxynucleotide followed by mismatch formation (By similarity). Together with the viral DNA ligase, fills the single nucleotide gaps generated by the AP endonuclease (Probable). Binds DNA with high affinity via the helix alphaE (By similarity).</text>
</comment>
<comment type="catalytic activity">
    <reaction evidence="2">
        <text>DNA(n) + a 2'-deoxyribonucleoside 5'-triphosphate = DNA(n+1) + diphosphate</text>
        <dbReference type="Rhea" id="RHEA:22508"/>
        <dbReference type="Rhea" id="RHEA-COMP:17339"/>
        <dbReference type="Rhea" id="RHEA-COMP:17340"/>
        <dbReference type="ChEBI" id="CHEBI:33019"/>
        <dbReference type="ChEBI" id="CHEBI:61560"/>
        <dbReference type="ChEBI" id="CHEBI:173112"/>
        <dbReference type="EC" id="2.7.7.7"/>
    </reaction>
</comment>
<comment type="cofactor">
    <cofactor evidence="2">
        <name>Mg(2+)</name>
        <dbReference type="ChEBI" id="CHEBI:18420"/>
    </cofactor>
    <text>In the presence of magnesium, pol X shows a strong preference for the ssDNA gaps having one and two nucleotides.</text>
</comment>
<comment type="subcellular location">
    <subcellularLocation>
        <location evidence="2">Virion</location>
    </subcellularLocation>
    <text evidence="2">Found in association with viral nucleoid.</text>
</comment>
<comment type="domain">
    <text evidence="2">Small DNA polymerase formed from only a palm and a C-terminal subdomain (By similarity). The total DNA-binding site of pol X is composed of two DNA-binding subsites (By similarity).</text>
</comment>
<comment type="miscellaneous">
    <text evidence="3">Consistent with its intracellular location, ASFV encodes its own replicative DNA polymerase and three base excision repair enzymes: a class II AP endonuclease, the repair polymerase Pol X, and an ATP-dependent DNA ligase.</text>
</comment>
<comment type="similarity">
    <text evidence="3">Belongs to the DNA polymerase type-X family.</text>
</comment>
<accession>P0C985</accession>
<sequence>MLTLIQGKKIVNDLRSRLAFEYNGQLIKILSKNIVAVGSLRREEKMLNDVDLLIIVPEKKLLKHVLPNIRIKDFSFSIKVCGERKCVLFIEWKKNTYQLDLFTALAEEKPYAVLHFTGPVSYLIRIRAALKKKNYKLNQYGLFKNQTLVPLKITTEKELIKELGFTYRIPKKRL</sequence>
<protein>
    <recommendedName>
        <fullName>Repair DNA polymerase X</fullName>
        <shortName>Pol X</shortName>
        <ecNumber evidence="2">2.7.7.7</ecNumber>
    </recommendedName>
    <alternativeName>
        <fullName>AsfvPolX</fullName>
    </alternativeName>
</protein>
<name>DPOLX_ASFWA</name>